<dbReference type="EC" id="4.3.3.7" evidence="1"/>
<dbReference type="EMBL" id="CP000478">
    <property type="protein sequence ID" value="ABK15759.1"/>
    <property type="molecule type" value="Genomic_DNA"/>
</dbReference>
<dbReference type="RefSeq" id="WP_011696932.1">
    <property type="nucleotide sequence ID" value="NC_008554.1"/>
</dbReference>
<dbReference type="SMR" id="A0LEA7"/>
<dbReference type="FunCoup" id="A0LEA7">
    <property type="interactions" value="507"/>
</dbReference>
<dbReference type="STRING" id="335543.Sfum_0056"/>
<dbReference type="KEGG" id="sfu:Sfum_0056"/>
<dbReference type="eggNOG" id="COG0329">
    <property type="taxonomic scope" value="Bacteria"/>
</dbReference>
<dbReference type="HOGENOM" id="CLU_049343_7_1_7"/>
<dbReference type="InParanoid" id="A0LEA7"/>
<dbReference type="OrthoDB" id="9782828at2"/>
<dbReference type="UniPathway" id="UPA00034">
    <property type="reaction ID" value="UER00017"/>
</dbReference>
<dbReference type="Proteomes" id="UP000001784">
    <property type="component" value="Chromosome"/>
</dbReference>
<dbReference type="GO" id="GO:0005829">
    <property type="term" value="C:cytosol"/>
    <property type="evidence" value="ECO:0007669"/>
    <property type="project" value="TreeGrafter"/>
</dbReference>
<dbReference type="GO" id="GO:0008840">
    <property type="term" value="F:4-hydroxy-tetrahydrodipicolinate synthase activity"/>
    <property type="evidence" value="ECO:0007669"/>
    <property type="project" value="UniProtKB-UniRule"/>
</dbReference>
<dbReference type="GO" id="GO:0019877">
    <property type="term" value="P:diaminopimelate biosynthetic process"/>
    <property type="evidence" value="ECO:0007669"/>
    <property type="project" value="UniProtKB-UniRule"/>
</dbReference>
<dbReference type="GO" id="GO:0009089">
    <property type="term" value="P:lysine biosynthetic process via diaminopimelate"/>
    <property type="evidence" value="ECO:0007669"/>
    <property type="project" value="UniProtKB-UniRule"/>
</dbReference>
<dbReference type="CDD" id="cd00950">
    <property type="entry name" value="DHDPS"/>
    <property type="match status" value="1"/>
</dbReference>
<dbReference type="Gene3D" id="3.20.20.70">
    <property type="entry name" value="Aldolase class I"/>
    <property type="match status" value="1"/>
</dbReference>
<dbReference type="HAMAP" id="MF_00418">
    <property type="entry name" value="DapA"/>
    <property type="match status" value="1"/>
</dbReference>
<dbReference type="InterPro" id="IPR013785">
    <property type="entry name" value="Aldolase_TIM"/>
</dbReference>
<dbReference type="InterPro" id="IPR005263">
    <property type="entry name" value="DapA"/>
</dbReference>
<dbReference type="InterPro" id="IPR002220">
    <property type="entry name" value="DapA-like"/>
</dbReference>
<dbReference type="InterPro" id="IPR020625">
    <property type="entry name" value="Schiff_base-form_aldolases_AS"/>
</dbReference>
<dbReference type="InterPro" id="IPR020624">
    <property type="entry name" value="Schiff_base-form_aldolases_CS"/>
</dbReference>
<dbReference type="NCBIfam" id="TIGR00674">
    <property type="entry name" value="dapA"/>
    <property type="match status" value="1"/>
</dbReference>
<dbReference type="PANTHER" id="PTHR12128:SF66">
    <property type="entry name" value="4-HYDROXY-2-OXOGLUTARATE ALDOLASE, MITOCHONDRIAL"/>
    <property type="match status" value="1"/>
</dbReference>
<dbReference type="PANTHER" id="PTHR12128">
    <property type="entry name" value="DIHYDRODIPICOLINATE SYNTHASE"/>
    <property type="match status" value="1"/>
</dbReference>
<dbReference type="Pfam" id="PF00701">
    <property type="entry name" value="DHDPS"/>
    <property type="match status" value="1"/>
</dbReference>
<dbReference type="PIRSF" id="PIRSF001365">
    <property type="entry name" value="DHDPS"/>
    <property type="match status" value="1"/>
</dbReference>
<dbReference type="PRINTS" id="PR00146">
    <property type="entry name" value="DHPICSNTHASE"/>
</dbReference>
<dbReference type="SMART" id="SM01130">
    <property type="entry name" value="DHDPS"/>
    <property type="match status" value="1"/>
</dbReference>
<dbReference type="SUPFAM" id="SSF51569">
    <property type="entry name" value="Aldolase"/>
    <property type="match status" value="1"/>
</dbReference>
<dbReference type="PROSITE" id="PS00665">
    <property type="entry name" value="DHDPS_1"/>
    <property type="match status" value="1"/>
</dbReference>
<dbReference type="PROSITE" id="PS00666">
    <property type="entry name" value="DHDPS_2"/>
    <property type="match status" value="1"/>
</dbReference>
<accession>A0LEA7</accession>
<organism>
    <name type="scientific">Syntrophobacter fumaroxidans (strain DSM 10017 / MPOB)</name>
    <dbReference type="NCBI Taxonomy" id="335543"/>
    <lineage>
        <taxon>Bacteria</taxon>
        <taxon>Pseudomonadati</taxon>
        <taxon>Thermodesulfobacteriota</taxon>
        <taxon>Syntrophobacteria</taxon>
        <taxon>Syntrophobacterales</taxon>
        <taxon>Syntrophobacteraceae</taxon>
        <taxon>Syntrophobacter</taxon>
    </lineage>
</organism>
<evidence type="ECO:0000255" key="1">
    <source>
        <dbReference type="HAMAP-Rule" id="MF_00418"/>
    </source>
</evidence>
<evidence type="ECO:0000305" key="2"/>
<comment type="function">
    <text evidence="1">Catalyzes the condensation of (S)-aspartate-beta-semialdehyde [(S)-ASA] and pyruvate to 4-hydroxy-tetrahydrodipicolinate (HTPA).</text>
</comment>
<comment type="catalytic activity">
    <reaction evidence="1">
        <text>L-aspartate 4-semialdehyde + pyruvate = (2S,4S)-4-hydroxy-2,3,4,5-tetrahydrodipicolinate + H2O + H(+)</text>
        <dbReference type="Rhea" id="RHEA:34171"/>
        <dbReference type="ChEBI" id="CHEBI:15361"/>
        <dbReference type="ChEBI" id="CHEBI:15377"/>
        <dbReference type="ChEBI" id="CHEBI:15378"/>
        <dbReference type="ChEBI" id="CHEBI:67139"/>
        <dbReference type="ChEBI" id="CHEBI:537519"/>
        <dbReference type="EC" id="4.3.3.7"/>
    </reaction>
</comment>
<comment type="pathway">
    <text evidence="1">Amino-acid biosynthesis; L-lysine biosynthesis via DAP pathway; (S)-tetrahydrodipicolinate from L-aspartate: step 3/4.</text>
</comment>
<comment type="subunit">
    <text evidence="1">Homotetramer; dimer of dimers.</text>
</comment>
<comment type="subcellular location">
    <subcellularLocation>
        <location evidence="1">Cytoplasm</location>
    </subcellularLocation>
</comment>
<comment type="similarity">
    <text evidence="1">Belongs to the DapA family.</text>
</comment>
<comment type="caution">
    <text evidence="2">Was originally thought to be a dihydrodipicolinate synthase (DHDPS), catalyzing the condensation of (S)-aspartate-beta-semialdehyde [(S)-ASA] and pyruvate to dihydrodipicolinate (DHDP). However, it was shown in E.coli that the product of the enzymatic reaction is not dihydrodipicolinate but in fact (4S)-4-hydroxy-2,3,4,5-tetrahydro-(2S)-dipicolinic acid (HTPA), and that the consecutive dehydration reaction leading to DHDP is not spontaneous but catalyzed by DapB.</text>
</comment>
<proteinExistence type="inferred from homology"/>
<gene>
    <name evidence="1" type="primary">dapA</name>
    <name type="ordered locus">Sfum_0056</name>
</gene>
<feature type="chain" id="PRO_1000050285" description="4-hydroxy-tetrahydrodipicolinate synthase">
    <location>
        <begin position="1"/>
        <end position="291"/>
    </location>
</feature>
<feature type="active site" description="Proton donor/acceptor" evidence="1">
    <location>
        <position position="132"/>
    </location>
</feature>
<feature type="active site" description="Schiff-base intermediate with substrate" evidence="1">
    <location>
        <position position="160"/>
    </location>
</feature>
<feature type="binding site" evidence="1">
    <location>
        <position position="44"/>
    </location>
    <ligand>
        <name>pyruvate</name>
        <dbReference type="ChEBI" id="CHEBI:15361"/>
    </ligand>
</feature>
<feature type="binding site" evidence="1">
    <location>
        <position position="202"/>
    </location>
    <ligand>
        <name>pyruvate</name>
        <dbReference type="ChEBI" id="CHEBI:15361"/>
    </ligand>
</feature>
<feature type="site" description="Part of a proton relay during catalysis" evidence="1">
    <location>
        <position position="43"/>
    </location>
</feature>
<feature type="site" description="Part of a proton relay during catalysis" evidence="1">
    <location>
        <position position="106"/>
    </location>
</feature>
<sequence length="291" mass="31580">MFQGAMVAIVTPFKAGQVDEETFRNLIEFQIANGTHGIVPCGTTGESATLSFNEHERVIEIAVEQVDKRVPVIAGTGSNNTEEAIRLTKHAKNAGADGALLISPYYNKPTQEGLYRHYEKIAKAVDIPLVPYNIPGRTAVNMEPDTIARLAKIDNIVAIKEAAGSMKQITDIIARCGDELVVLSGEDFLTFPLLCVGGKGVISVVSNIAPADMANLCNLFLGGDFDAARKLYYRLLPLCHGLFYETNPAPVKAALAMMNKIPSDELRLPLAPMSPANRLRLRQDLQAYGLI</sequence>
<keyword id="KW-0028">Amino-acid biosynthesis</keyword>
<keyword id="KW-0963">Cytoplasm</keyword>
<keyword id="KW-0220">Diaminopimelate biosynthesis</keyword>
<keyword id="KW-0456">Lyase</keyword>
<keyword id="KW-0457">Lysine biosynthesis</keyword>
<keyword id="KW-1185">Reference proteome</keyword>
<keyword id="KW-0704">Schiff base</keyword>
<reference key="1">
    <citation type="submission" date="2006-10" db="EMBL/GenBank/DDBJ databases">
        <title>Complete sequence of Syntrophobacter fumaroxidans MPOB.</title>
        <authorList>
            <consortium name="US DOE Joint Genome Institute"/>
            <person name="Copeland A."/>
            <person name="Lucas S."/>
            <person name="Lapidus A."/>
            <person name="Barry K."/>
            <person name="Detter J.C."/>
            <person name="Glavina del Rio T."/>
            <person name="Hammon N."/>
            <person name="Israni S."/>
            <person name="Pitluck S."/>
            <person name="Goltsman E.G."/>
            <person name="Martinez M."/>
            <person name="Schmutz J."/>
            <person name="Larimer F."/>
            <person name="Land M."/>
            <person name="Hauser L."/>
            <person name="Kyrpides N."/>
            <person name="Kim E."/>
            <person name="Boone D.R."/>
            <person name="Brockman F."/>
            <person name="Culley D."/>
            <person name="Ferry J."/>
            <person name="Gunsalus R."/>
            <person name="McInerney M.J."/>
            <person name="Morrison M."/>
            <person name="Plugge C."/>
            <person name="Rohlin L."/>
            <person name="Scholten J."/>
            <person name="Sieber J."/>
            <person name="Stams A.J.M."/>
            <person name="Worm P."/>
            <person name="Henstra A.M."/>
            <person name="Richardson P."/>
        </authorList>
    </citation>
    <scope>NUCLEOTIDE SEQUENCE [LARGE SCALE GENOMIC DNA]</scope>
    <source>
        <strain>DSM 10017 / MPOB</strain>
    </source>
</reference>
<name>DAPA_SYNFM</name>
<protein>
    <recommendedName>
        <fullName evidence="1">4-hydroxy-tetrahydrodipicolinate synthase</fullName>
        <shortName evidence="1">HTPA synthase</shortName>
        <ecNumber evidence="1">4.3.3.7</ecNumber>
    </recommendedName>
</protein>